<reference key="1">
    <citation type="journal article" date="2006" name="Proc. Natl. Acad. Sci. U.S.A.">
        <title>Molecular genetic anatomy of inter- and intraserotype variation in the human bacterial pathogen group A Streptococcus.</title>
        <authorList>
            <person name="Beres S.B."/>
            <person name="Richter E.W."/>
            <person name="Nagiec M.J."/>
            <person name="Sumby P."/>
            <person name="Porcella S.F."/>
            <person name="DeLeo F.R."/>
            <person name="Musser J.M."/>
        </authorList>
    </citation>
    <scope>NUCLEOTIDE SEQUENCE [LARGE SCALE GENOMIC DNA]</scope>
    <source>
        <strain>MGAS9429</strain>
    </source>
</reference>
<evidence type="ECO:0000255" key="1">
    <source>
        <dbReference type="HAMAP-Rule" id="MF_00360"/>
    </source>
</evidence>
<evidence type="ECO:0000305" key="2"/>
<organism>
    <name type="scientific">Streptococcus pyogenes serotype M12 (strain MGAS9429)</name>
    <dbReference type="NCBI Taxonomy" id="370551"/>
    <lineage>
        <taxon>Bacteria</taxon>
        <taxon>Bacillati</taxon>
        <taxon>Bacillota</taxon>
        <taxon>Bacilli</taxon>
        <taxon>Lactobacillales</taxon>
        <taxon>Streptococcaceae</taxon>
        <taxon>Streptococcus</taxon>
    </lineage>
</organism>
<dbReference type="EMBL" id="CP000259">
    <property type="protein sequence ID" value="ABF32747.1"/>
    <property type="molecule type" value="Genomic_DNA"/>
</dbReference>
<dbReference type="RefSeq" id="WP_002983117.1">
    <property type="nucleotide sequence ID" value="NC_008021.1"/>
</dbReference>
<dbReference type="SMR" id="Q1JK76"/>
<dbReference type="GeneID" id="83689976"/>
<dbReference type="KEGG" id="spk:MGAS9429_Spy1560"/>
<dbReference type="HOGENOM" id="CLU_113441_5_3_9"/>
<dbReference type="Proteomes" id="UP000002433">
    <property type="component" value="Chromosome"/>
</dbReference>
<dbReference type="GO" id="GO:0005737">
    <property type="term" value="C:cytoplasm"/>
    <property type="evidence" value="ECO:0007669"/>
    <property type="project" value="UniProtKB-ARBA"/>
</dbReference>
<dbReference type="GO" id="GO:1990904">
    <property type="term" value="C:ribonucleoprotein complex"/>
    <property type="evidence" value="ECO:0007669"/>
    <property type="project" value="UniProtKB-KW"/>
</dbReference>
<dbReference type="GO" id="GO:0005840">
    <property type="term" value="C:ribosome"/>
    <property type="evidence" value="ECO:0007669"/>
    <property type="project" value="UniProtKB-KW"/>
</dbReference>
<dbReference type="GO" id="GO:0070181">
    <property type="term" value="F:small ribosomal subunit rRNA binding"/>
    <property type="evidence" value="ECO:0007669"/>
    <property type="project" value="TreeGrafter"/>
</dbReference>
<dbReference type="GO" id="GO:0003735">
    <property type="term" value="F:structural constituent of ribosome"/>
    <property type="evidence" value="ECO:0007669"/>
    <property type="project" value="InterPro"/>
</dbReference>
<dbReference type="GO" id="GO:0006412">
    <property type="term" value="P:translation"/>
    <property type="evidence" value="ECO:0007669"/>
    <property type="project" value="UniProtKB-UniRule"/>
</dbReference>
<dbReference type="CDD" id="cd00473">
    <property type="entry name" value="bS6"/>
    <property type="match status" value="1"/>
</dbReference>
<dbReference type="FunFam" id="3.30.70.60:FF:000002">
    <property type="entry name" value="30S ribosomal protein S6"/>
    <property type="match status" value="1"/>
</dbReference>
<dbReference type="Gene3D" id="3.30.70.60">
    <property type="match status" value="1"/>
</dbReference>
<dbReference type="HAMAP" id="MF_00360">
    <property type="entry name" value="Ribosomal_bS6"/>
    <property type="match status" value="1"/>
</dbReference>
<dbReference type="InterPro" id="IPR000529">
    <property type="entry name" value="Ribosomal_bS6"/>
</dbReference>
<dbReference type="InterPro" id="IPR035980">
    <property type="entry name" value="Ribosomal_bS6_sf"/>
</dbReference>
<dbReference type="InterPro" id="IPR020814">
    <property type="entry name" value="Ribosomal_S6_plastid/chlpt"/>
</dbReference>
<dbReference type="InterPro" id="IPR014717">
    <property type="entry name" value="Transl_elong_EF1B/ribsomal_bS6"/>
</dbReference>
<dbReference type="NCBIfam" id="TIGR00166">
    <property type="entry name" value="S6"/>
    <property type="match status" value="1"/>
</dbReference>
<dbReference type="PANTHER" id="PTHR21011">
    <property type="entry name" value="MITOCHONDRIAL 28S RIBOSOMAL PROTEIN S6"/>
    <property type="match status" value="1"/>
</dbReference>
<dbReference type="PANTHER" id="PTHR21011:SF1">
    <property type="entry name" value="SMALL RIBOSOMAL SUBUNIT PROTEIN BS6M"/>
    <property type="match status" value="1"/>
</dbReference>
<dbReference type="Pfam" id="PF01250">
    <property type="entry name" value="Ribosomal_S6"/>
    <property type="match status" value="1"/>
</dbReference>
<dbReference type="SUPFAM" id="SSF54995">
    <property type="entry name" value="Ribosomal protein S6"/>
    <property type="match status" value="1"/>
</dbReference>
<gene>
    <name evidence="1" type="primary">rpsF</name>
    <name type="ordered locus">MGAS9429_Spy1560</name>
</gene>
<feature type="chain" id="PRO_1000005365" description="Small ribosomal subunit protein bS6">
    <location>
        <begin position="1"/>
        <end position="96"/>
    </location>
</feature>
<protein>
    <recommendedName>
        <fullName evidence="1">Small ribosomal subunit protein bS6</fullName>
    </recommendedName>
    <alternativeName>
        <fullName evidence="2">30S ribosomal protein S6</fullName>
    </alternativeName>
</protein>
<name>RS6_STRPC</name>
<sequence>MAKYEILYIIRPNIEEEAKNALVARFDSILTDNGATVVESKDWEKRRLAYEINDFREGLYHIVNLEATDAAALNEFDRLSKINGDILRHMIVKLDA</sequence>
<comment type="function">
    <text evidence="1">Binds together with bS18 to 16S ribosomal RNA.</text>
</comment>
<comment type="similarity">
    <text evidence="1">Belongs to the bacterial ribosomal protein bS6 family.</text>
</comment>
<proteinExistence type="inferred from homology"/>
<keyword id="KW-0687">Ribonucleoprotein</keyword>
<keyword id="KW-0689">Ribosomal protein</keyword>
<keyword id="KW-0694">RNA-binding</keyword>
<keyword id="KW-0699">rRNA-binding</keyword>
<accession>Q1JK76</accession>